<gene>
    <name type="primary">bath-41</name>
    <name type="ORF">F37A4.9</name>
</gene>
<proteinExistence type="evidence at protein level"/>
<name>BAT41_CAEEL</name>
<keyword id="KW-1185">Reference proteome</keyword>
<keyword id="KW-0833">Ubl conjugation pathway</keyword>
<comment type="function">
    <text evidence="4">Probable substrate-specific adapter of an E3 ubiquitin-protein ligase complex which mediates the ubiquitination and subsequent proteasomal degradation of target proteins.</text>
</comment>
<comment type="pathway">
    <text>Protein modification; protein ubiquitination.</text>
</comment>
<comment type="subunit">
    <text evidence="4">Interacts with cul-3.</text>
</comment>
<comment type="interaction">
    <interactant intactId="EBI-314147">
        <id>P41886</id>
    </interactant>
    <interactant intactId="EBI-593075">
        <id>Q17391</id>
        <label>cul-3</label>
    </interactant>
    <organismsDiffer>false</organismsDiffer>
    <experiments>2</experiments>
</comment>
<organism>
    <name type="scientific">Caenorhabditis elegans</name>
    <dbReference type="NCBI Taxonomy" id="6239"/>
    <lineage>
        <taxon>Eukaryota</taxon>
        <taxon>Metazoa</taxon>
        <taxon>Ecdysozoa</taxon>
        <taxon>Nematoda</taxon>
        <taxon>Chromadorea</taxon>
        <taxon>Rhabditida</taxon>
        <taxon>Rhabditina</taxon>
        <taxon>Rhabditomorpha</taxon>
        <taxon>Rhabditoidea</taxon>
        <taxon>Rhabditidae</taxon>
        <taxon>Peloderinae</taxon>
        <taxon>Caenorhabditis</taxon>
    </lineage>
</organism>
<sequence>MEINNGAQPENAAVSIPSRSPSGKSEKRKSPSIVSGCRTVMNERSFTNYWSVERFTVQLELHNPAEFMLAPKFGDGDYEFVMKLFPNGKDEETAGYLSLFLLINKCPNPRLRFRVSFTVETADGPRSCHLNKNLVTINRSGIVTASKFFSLDILRSAMNVYIPNDILTIGCELTIFGECTTQISSLFKPYQRTHSASSTSRSLSSPNTKCLKIDESSAHDAFTEFLSTGEFSDFIIVASCGREFPTHMCILAARSEYFKVLLRNHSTKEFMSKRLQFDDISARTLDVLLRHMYASAAGRVVKLEEDQLTEDLISAMDRLMINSLRDEVARLIGSKVTVDNVLTRISMAAELRLDDTYDVLLDFFSNHKHECMKLTAWDELESAKPPLAIKILRDAFSNTDSPSTTSMDSRIIDRITLT</sequence>
<feature type="chain" id="PRO_0000065329" description="BTB and MATH domain-containing protein 41">
    <location>
        <begin position="1"/>
        <end position="418"/>
    </location>
</feature>
<feature type="domain" description="MATH" evidence="2">
    <location>
        <begin position="45"/>
        <end position="173"/>
    </location>
</feature>
<feature type="domain" description="BTB" evidence="1">
    <location>
        <begin position="232"/>
        <end position="293"/>
    </location>
</feature>
<feature type="region of interest" description="Disordered" evidence="3">
    <location>
        <begin position="1"/>
        <end position="33"/>
    </location>
</feature>
<accession>P41886</accession>
<protein>
    <recommendedName>
        <fullName>BTB and MATH domain-containing protein 41</fullName>
    </recommendedName>
</protein>
<evidence type="ECO:0000255" key="1">
    <source>
        <dbReference type="PROSITE-ProRule" id="PRU00037"/>
    </source>
</evidence>
<evidence type="ECO:0000255" key="2">
    <source>
        <dbReference type="PROSITE-ProRule" id="PRU00129"/>
    </source>
</evidence>
<evidence type="ECO:0000256" key="3">
    <source>
        <dbReference type="SAM" id="MobiDB-lite"/>
    </source>
</evidence>
<evidence type="ECO:0000269" key="4">
    <source>
    </source>
</evidence>
<dbReference type="EMBL" id="FO081312">
    <property type="protein sequence ID" value="CCD70710.1"/>
    <property type="molecule type" value="Genomic_DNA"/>
</dbReference>
<dbReference type="PIR" id="S44646">
    <property type="entry name" value="S44646"/>
</dbReference>
<dbReference type="RefSeq" id="NP_498473.1">
    <property type="nucleotide sequence ID" value="NM_066072.8"/>
</dbReference>
<dbReference type="SMR" id="P41886"/>
<dbReference type="BioGRID" id="41162">
    <property type="interactions" value="7"/>
</dbReference>
<dbReference type="DIP" id="DIP-26170N"/>
<dbReference type="FunCoup" id="P41886">
    <property type="interactions" value="402"/>
</dbReference>
<dbReference type="IntAct" id="P41886">
    <property type="interactions" value="5"/>
</dbReference>
<dbReference type="STRING" id="6239.F37A4.9.1"/>
<dbReference type="PaxDb" id="6239-F37A4.9"/>
<dbReference type="PeptideAtlas" id="P41886"/>
<dbReference type="EnsemblMetazoa" id="F37A4.9.1">
    <property type="protein sequence ID" value="F37A4.9.1"/>
    <property type="gene ID" value="WBGene00018137"/>
</dbReference>
<dbReference type="GeneID" id="175946"/>
<dbReference type="KEGG" id="cel:CELE_F37A4.9"/>
<dbReference type="UCSC" id="F37A4.9">
    <property type="organism name" value="c. elegans"/>
</dbReference>
<dbReference type="AGR" id="WB:WBGene00018137"/>
<dbReference type="CTD" id="175946"/>
<dbReference type="WormBase" id="F37A4.9">
    <property type="protein sequence ID" value="CE00790"/>
    <property type="gene ID" value="WBGene00018137"/>
    <property type="gene designation" value="bath-41"/>
</dbReference>
<dbReference type="eggNOG" id="KOG1987">
    <property type="taxonomic scope" value="Eukaryota"/>
</dbReference>
<dbReference type="HOGENOM" id="CLU_657627_0_0_1"/>
<dbReference type="InParanoid" id="P41886"/>
<dbReference type="OMA" id="PRGCALN"/>
<dbReference type="OrthoDB" id="646702at2759"/>
<dbReference type="PhylomeDB" id="P41886"/>
<dbReference type="Reactome" id="R-CEL-5632684">
    <property type="pathway name" value="Hedgehog 'on' state"/>
</dbReference>
<dbReference type="Reactome" id="R-CEL-9706019">
    <property type="pathway name" value="RHOBTB3 ATPase cycle"/>
</dbReference>
<dbReference type="SignaLink" id="P41886"/>
<dbReference type="UniPathway" id="UPA00143"/>
<dbReference type="PRO" id="PR:P41886"/>
<dbReference type="Proteomes" id="UP000001940">
    <property type="component" value="Chromosome III"/>
</dbReference>
<dbReference type="Bgee" id="WBGene00018137">
    <property type="expression patterns" value="Expressed in germ line (C elegans) and 4 other cell types or tissues"/>
</dbReference>
<dbReference type="GO" id="GO:0005737">
    <property type="term" value="C:cytoplasm"/>
    <property type="evidence" value="ECO:0000318"/>
    <property type="project" value="GO_Central"/>
</dbReference>
<dbReference type="GO" id="GO:0005634">
    <property type="term" value="C:nucleus"/>
    <property type="evidence" value="ECO:0000318"/>
    <property type="project" value="GO_Central"/>
</dbReference>
<dbReference type="GO" id="GO:0031625">
    <property type="term" value="F:ubiquitin protein ligase binding"/>
    <property type="evidence" value="ECO:0000318"/>
    <property type="project" value="GO_Central"/>
</dbReference>
<dbReference type="GO" id="GO:0043161">
    <property type="term" value="P:proteasome-mediated ubiquitin-dependent protein catabolic process"/>
    <property type="evidence" value="ECO:0000318"/>
    <property type="project" value="GO_Central"/>
</dbReference>
<dbReference type="GO" id="GO:0016567">
    <property type="term" value="P:protein ubiquitination"/>
    <property type="evidence" value="ECO:0007669"/>
    <property type="project" value="UniProtKB-UniPathway"/>
</dbReference>
<dbReference type="GO" id="GO:0030162">
    <property type="term" value="P:regulation of proteolysis"/>
    <property type="evidence" value="ECO:0000318"/>
    <property type="project" value="GO_Central"/>
</dbReference>
<dbReference type="CDD" id="cd18186">
    <property type="entry name" value="BTB_POZ_ZBTB_KLHL-like"/>
    <property type="match status" value="1"/>
</dbReference>
<dbReference type="FunFam" id="3.30.710.10:FF:000325">
    <property type="entry name" value="BTB and MATH domain-containing protein 41"/>
    <property type="match status" value="1"/>
</dbReference>
<dbReference type="Gene3D" id="2.60.210.10">
    <property type="entry name" value="Apoptosis, Tumor Necrosis Factor Receptor Associated Protein 2, Chain A"/>
    <property type="match status" value="1"/>
</dbReference>
<dbReference type="Gene3D" id="3.30.710.10">
    <property type="entry name" value="Potassium Channel Kv1.1, Chain A"/>
    <property type="match status" value="1"/>
</dbReference>
<dbReference type="InterPro" id="IPR000210">
    <property type="entry name" value="BTB/POZ_dom"/>
</dbReference>
<dbReference type="InterPro" id="IPR002083">
    <property type="entry name" value="MATH/TRAF_dom"/>
</dbReference>
<dbReference type="InterPro" id="IPR011333">
    <property type="entry name" value="SKP1/BTB/POZ_sf"/>
</dbReference>
<dbReference type="InterPro" id="IPR008974">
    <property type="entry name" value="TRAF-like"/>
</dbReference>
<dbReference type="PANTHER" id="PTHR24413">
    <property type="entry name" value="SPECKLE-TYPE POZ PROTEIN"/>
    <property type="match status" value="1"/>
</dbReference>
<dbReference type="Pfam" id="PF00651">
    <property type="entry name" value="BTB"/>
    <property type="match status" value="1"/>
</dbReference>
<dbReference type="Pfam" id="PF22486">
    <property type="entry name" value="MATH_2"/>
    <property type="match status" value="1"/>
</dbReference>
<dbReference type="SMART" id="SM00225">
    <property type="entry name" value="BTB"/>
    <property type="match status" value="1"/>
</dbReference>
<dbReference type="SMART" id="SM00061">
    <property type="entry name" value="MATH"/>
    <property type="match status" value="1"/>
</dbReference>
<dbReference type="SUPFAM" id="SSF54695">
    <property type="entry name" value="POZ domain"/>
    <property type="match status" value="1"/>
</dbReference>
<dbReference type="SUPFAM" id="SSF49599">
    <property type="entry name" value="TRAF domain-like"/>
    <property type="match status" value="1"/>
</dbReference>
<dbReference type="PROSITE" id="PS50097">
    <property type="entry name" value="BTB"/>
    <property type="match status" value="1"/>
</dbReference>
<dbReference type="PROSITE" id="PS50144">
    <property type="entry name" value="MATH"/>
    <property type="match status" value="1"/>
</dbReference>
<reference key="1">
    <citation type="journal article" date="1998" name="Science">
        <title>Genome sequence of the nematode C. elegans: a platform for investigating biology.</title>
        <authorList>
            <consortium name="The C. elegans sequencing consortium"/>
        </authorList>
    </citation>
    <scope>NUCLEOTIDE SEQUENCE [LARGE SCALE GENOMIC DNA]</scope>
    <source>
        <strain>Bristol N2</strain>
    </source>
</reference>
<reference key="2">
    <citation type="journal article" date="2003" name="Nature">
        <title>BTB proteins are substrate-specific adaptors in an SCF-like modular ubiquitin ligase containing CUL-3.</title>
        <authorList>
            <person name="Xu L."/>
            <person name="Wei Y."/>
            <person name="Reboul J."/>
            <person name="Vaglio P."/>
            <person name="Shin T.H."/>
            <person name="Vidal M."/>
            <person name="Elledge S.J."/>
            <person name="Harper J.W."/>
        </authorList>
    </citation>
    <scope>FUNCTION AS AN E3 UBIQUITIN-PROTEIN LIGASE</scope>
    <scope>INTERACTION WITH CUL3</scope>
</reference>